<sequence length="1138" mass="122293">MGDFAAPAAAANGSSICINSSLNSSLGGAGIGVNNTPNSTPAAPSSNHPAAGGCGGSGGPGGGSAAVPKHSTVVERLRQRIEGCRRHHVNCENRYQQAQVEQLELERRDTVSLYQRTLEQRAKKSGAGTGKQQHPSKPQQDAEAASAEQRNHTLIMLQETVKRKLEGARSPLNGDQQNGACDGNFSPTSKRIRKDISAGMEAINNLPSNMPLPSASPLHQLDLKPSLPLQNSGTHTPGLLEDLSKNGRLPEIKLPVNGCSDLEDSFTILQSKDLKQEPLDDPTCIDTSETSLSNQNKLFSDINLNDQEWQELIDELANTVPEDDIQDLFNEDFEEKKEPEFSQPATETPLSQESASVKSDPSHSPFAHVSMGSPQARPSSSGPPFSTVSTATSLPSVASTPAAPNPASSPANCAVQSPQTPNQAHTPGQAPPRPGNGYLLNPAAVTVAGSASGPVAVPSSDMSPAEQLKQMAAQQQQRAKLMQQKQQQQQQQQQQQQQQQQQQQQQQQQQHSNQTSNWSPLGPPSSPYGAAFTAEKPNSPMMYPQAFNNQNPIVPPMANNLQKTTMNNYLPQNHMNMINQQPNNLGTNSLNKQHNILTYGNTKPLTHFNADLSQRMTPPVANPNKNPLMPYIQQQQQQQQQQQQQQQQQQPPPPQLQAPRAHLSEDQKRLLLMKQKGVMNQPMAYAALPSHGQEQHPVGLPRTTGPMQSSVPPGSGGMVSGASPAGPGFLGSQPQAAIMKQMLIDQRAQLIEQQKQQFLREQRQQQQQQQQQILAEQQLQQSHLPRQHLQPQRNPYPVQQVNQFQGSPQDIAAVRSQAALQSMRTSRLMAQNAGMMGIGPSQNPGTMATAAAQSEMGLAPYSTTPTSQPGMYNMSTGMTQMLQHPNQSGMSITHNQAQGPRQPASGQGVGMVSGFGQSMLVNSAITQQHPQMKGPVGQALPRPQAPPRLQSLMGTVQQGAQSWQQRSLQGMPGRTSGELGPFNNGASYPLQAGQPRLTKQHFPQGLSQSVVDANTGTVRTLNPAAMGRQMMPSLPGQQGTSQARPMVMSGLSQGVPGMPAFSQPPAQQQIPSGSFAPSSQSQAYERNAPQDVSYNYSGDGAGGSFPGLPDGADLVDSIIKGGPGDEWMQELDELFGNP</sequence>
<organism>
    <name type="scientific">Homo sapiens</name>
    <name type="common">Human</name>
    <dbReference type="NCBI Taxonomy" id="9606"/>
    <lineage>
        <taxon>Eukaryota</taxon>
        <taxon>Metazoa</taxon>
        <taxon>Chordata</taxon>
        <taxon>Craniata</taxon>
        <taxon>Vertebrata</taxon>
        <taxon>Euteleostomi</taxon>
        <taxon>Mammalia</taxon>
        <taxon>Eutheria</taxon>
        <taxon>Euarchontoglires</taxon>
        <taxon>Primates</taxon>
        <taxon>Haplorrhini</taxon>
        <taxon>Catarrhini</taxon>
        <taxon>Hominidae</taxon>
        <taxon>Homo</taxon>
    </lineage>
</organism>
<comment type="function">
    <text evidence="3 4">Acts as a transcriptional coactivator for NOTCH proteins. Has been shown to amplify NOTCH-induced transcription of HES1.</text>
</comment>
<comment type="subunit">
    <text evidence="3 4">Interacts through its N-terminal region with the ankyrin repeat region of the Notch proteins NOTCH1, NOTCH2, NOTCH3 and NOTCH4. Forms a DNA-binding complex with Notch proteins and RBPSUH/RBP-J kappa.</text>
</comment>
<comment type="interaction">
    <interactant intactId="EBI-1043855">
        <id>Q96JK9</id>
    </interactant>
    <interactant intactId="EBI-9692333">
        <id>PRO_0000007676</id>
        <label>NOTCH1</label>
        <dbReference type="UniProtKB" id="P46531"/>
    </interactant>
    <organismsDiffer>false</organismsDiffer>
    <experiments>2</experiments>
</comment>
<comment type="subcellular location">
    <subcellularLocation>
        <location evidence="3">Nucleus speckle</location>
    </subcellularLocation>
    <text>Nuclear, in a punctate manner.</text>
</comment>
<comment type="domain">
    <text evidence="3">The C-terminal domain is required for transcriptional activation.</text>
</comment>
<comment type="similarity">
    <text evidence="8">Belongs to the mastermind family.</text>
</comment>
<comment type="sequence caution" evidence="8">
    <conflict type="erroneous initiation">
        <sequence resource="EMBL-CDS" id="BAB47445"/>
    </conflict>
    <text>Extended N-terminus.</text>
</comment>
<comment type="sequence caution" evidence="8">
    <conflict type="erroneous initiation">
        <sequence resource="EMBL-CDS" id="BAG53919"/>
    </conflict>
    <text>Extended N-terminus.</text>
</comment>
<gene>
    <name evidence="10" type="primary">MAML3</name>
    <name evidence="9" type="synonym">KIAA1816</name>
</gene>
<feature type="chain" id="PRO_0000129496" description="Mastermind-like protein 3">
    <location>
        <begin position="1"/>
        <end position="1138"/>
    </location>
</feature>
<feature type="region of interest" description="Disordered" evidence="1">
    <location>
        <begin position="37"/>
        <end position="68"/>
    </location>
</feature>
<feature type="region of interest" description="Disordered" evidence="1">
    <location>
        <begin position="119"/>
        <end position="148"/>
    </location>
</feature>
<feature type="region of interest" description="Disordered" evidence="1">
    <location>
        <begin position="169"/>
        <end position="188"/>
    </location>
</feature>
<feature type="region of interest" description="Disordered" evidence="1">
    <location>
        <begin position="207"/>
        <end position="237"/>
    </location>
</feature>
<feature type="region of interest" description="Disordered" evidence="1">
    <location>
        <begin position="334"/>
        <end position="480"/>
    </location>
</feature>
<feature type="region of interest" description="Disordered" evidence="1">
    <location>
        <begin position="503"/>
        <end position="547"/>
    </location>
</feature>
<feature type="region of interest" description="Disordered" evidence="1">
    <location>
        <begin position="615"/>
        <end position="662"/>
    </location>
</feature>
<feature type="region of interest" description="Disordered" evidence="1">
    <location>
        <begin position="691"/>
        <end position="721"/>
    </location>
</feature>
<feature type="region of interest" description="Disordered" evidence="1">
    <location>
        <begin position="968"/>
        <end position="991"/>
    </location>
</feature>
<feature type="region of interest" description="Disordered" evidence="1">
    <location>
        <begin position="1024"/>
        <end position="1084"/>
    </location>
</feature>
<feature type="region of interest" description="Disordered" evidence="1">
    <location>
        <begin position="1090"/>
        <end position="1109"/>
    </location>
</feature>
<feature type="compositionally biased region" description="Polar residues" evidence="1">
    <location>
        <begin position="37"/>
        <end position="48"/>
    </location>
</feature>
<feature type="compositionally biased region" description="Gly residues" evidence="1">
    <location>
        <begin position="52"/>
        <end position="64"/>
    </location>
</feature>
<feature type="compositionally biased region" description="Polar residues" evidence="1">
    <location>
        <begin position="130"/>
        <end position="139"/>
    </location>
</feature>
<feature type="compositionally biased region" description="Polar residues" evidence="1">
    <location>
        <begin position="173"/>
        <end position="188"/>
    </location>
</feature>
<feature type="compositionally biased region" description="Polar residues" evidence="1">
    <location>
        <begin position="343"/>
        <end position="359"/>
    </location>
</feature>
<feature type="compositionally biased region" description="Polar residues" evidence="1">
    <location>
        <begin position="372"/>
        <end position="394"/>
    </location>
</feature>
<feature type="compositionally biased region" description="Low complexity" evidence="1">
    <location>
        <begin position="395"/>
        <end position="411"/>
    </location>
</feature>
<feature type="compositionally biased region" description="Polar residues" evidence="1">
    <location>
        <begin position="414"/>
        <end position="426"/>
    </location>
</feature>
<feature type="compositionally biased region" description="Low complexity" evidence="1">
    <location>
        <begin position="467"/>
        <end position="480"/>
    </location>
</feature>
<feature type="compositionally biased region" description="Low complexity" evidence="1">
    <location>
        <begin position="633"/>
        <end position="649"/>
    </location>
</feature>
<feature type="compositionally biased region" description="Polar residues" evidence="1">
    <location>
        <begin position="1064"/>
        <end position="1084"/>
    </location>
</feature>
<feature type="modified residue" description="N6-acetyllysine" evidence="11">
    <location>
        <position position="603"/>
    </location>
</feature>
<feature type="sequence variant" id="VAR_046650" evidence="2 5 6 7">
    <location>
        <position position="768"/>
    </location>
</feature>
<feature type="sequence conflict" description="In Ref. 1; BAB47445, 2; BAG53919, 4; EAX05107 and 5; AAI37132/AAI37131." evidence="8" ref="1 2 4 5">
    <location>
        <begin position="486"/>
        <end position="489"/>
    </location>
</feature>
<feature type="sequence conflict" description="In Ref. 1; BAB47445 and 2; BAG53919." evidence="8" ref="1 2">
    <original>P</original>
    <variation>H</variation>
    <location>
        <position position="1064"/>
    </location>
</feature>
<dbReference type="EMBL" id="AB058719">
    <property type="protein sequence ID" value="BAB47445.1"/>
    <property type="status" value="ALT_INIT"/>
    <property type="molecule type" value="mRNA"/>
</dbReference>
<dbReference type="EMBL" id="AK123604">
    <property type="protein sequence ID" value="BAG53919.1"/>
    <property type="status" value="ALT_INIT"/>
    <property type="molecule type" value="mRNA"/>
</dbReference>
<dbReference type="EMBL" id="AC097464">
    <property type="status" value="NOT_ANNOTATED_CDS"/>
    <property type="molecule type" value="Genomic_DNA"/>
</dbReference>
<dbReference type="EMBL" id="AC104798">
    <property type="status" value="NOT_ANNOTATED_CDS"/>
    <property type="molecule type" value="Genomic_DNA"/>
</dbReference>
<dbReference type="EMBL" id="AC108053">
    <property type="status" value="NOT_ANNOTATED_CDS"/>
    <property type="molecule type" value="Genomic_DNA"/>
</dbReference>
<dbReference type="EMBL" id="AC131182">
    <property type="status" value="NOT_ANNOTATED_CDS"/>
    <property type="molecule type" value="Genomic_DNA"/>
</dbReference>
<dbReference type="EMBL" id="CH471056">
    <property type="protein sequence ID" value="EAX05107.1"/>
    <property type="molecule type" value="Genomic_DNA"/>
</dbReference>
<dbReference type="EMBL" id="BC137130">
    <property type="protein sequence ID" value="AAI37131.1"/>
    <property type="molecule type" value="mRNA"/>
</dbReference>
<dbReference type="EMBL" id="BC137131">
    <property type="protein sequence ID" value="AAI37132.1"/>
    <property type="molecule type" value="mRNA"/>
</dbReference>
<dbReference type="CCDS" id="CCDS54805.1"/>
<dbReference type="RefSeq" id="NP_061187.2">
    <property type="nucleotide sequence ID" value="NM_018717.4"/>
</dbReference>
<dbReference type="SMR" id="Q96JK9"/>
<dbReference type="BioGRID" id="120704">
    <property type="interactions" value="16"/>
</dbReference>
<dbReference type="CORUM" id="Q96JK9"/>
<dbReference type="FunCoup" id="Q96JK9">
    <property type="interactions" value="2148"/>
</dbReference>
<dbReference type="IntAct" id="Q96JK9">
    <property type="interactions" value="10"/>
</dbReference>
<dbReference type="MINT" id="Q96JK9"/>
<dbReference type="STRING" id="9606.ENSP00000421180"/>
<dbReference type="GlyGen" id="Q96JK9">
    <property type="glycosylation" value="5 sites, 1 O-linked glycan (3 sites)"/>
</dbReference>
<dbReference type="iPTMnet" id="Q96JK9"/>
<dbReference type="PhosphoSitePlus" id="Q96JK9"/>
<dbReference type="SwissPalm" id="Q96JK9"/>
<dbReference type="BioMuta" id="MAML3"/>
<dbReference type="jPOST" id="Q96JK9"/>
<dbReference type="MassIVE" id="Q96JK9"/>
<dbReference type="PaxDb" id="9606-ENSP00000421180"/>
<dbReference type="PeptideAtlas" id="Q96JK9"/>
<dbReference type="ProteomicsDB" id="18717"/>
<dbReference type="ProteomicsDB" id="76979"/>
<dbReference type="Antibodypedia" id="7420">
    <property type="antibodies" value="223 antibodies from 28 providers"/>
</dbReference>
<dbReference type="DNASU" id="55534"/>
<dbReference type="Ensembl" id="ENST00000509479.6">
    <property type="protein sequence ID" value="ENSP00000421180.1"/>
    <property type="gene ID" value="ENSG00000196782.13"/>
</dbReference>
<dbReference type="GeneID" id="55534"/>
<dbReference type="KEGG" id="hsa:55534"/>
<dbReference type="MANE-Select" id="ENST00000509479.6">
    <property type="protein sequence ID" value="ENSP00000421180.1"/>
    <property type="RefSeq nucleotide sequence ID" value="NM_018717.5"/>
    <property type="RefSeq protein sequence ID" value="NP_061187.3"/>
</dbReference>
<dbReference type="UCSC" id="uc062zte.1">
    <property type="organism name" value="human"/>
</dbReference>
<dbReference type="AGR" id="HGNC:16272"/>
<dbReference type="CTD" id="55534"/>
<dbReference type="DisGeNET" id="55534"/>
<dbReference type="GeneCards" id="MAML3"/>
<dbReference type="HGNC" id="HGNC:16272">
    <property type="gene designation" value="MAML3"/>
</dbReference>
<dbReference type="HPA" id="ENSG00000196782">
    <property type="expression patterns" value="Low tissue specificity"/>
</dbReference>
<dbReference type="MalaCards" id="MAML3"/>
<dbReference type="MIM" id="608991">
    <property type="type" value="gene"/>
</dbReference>
<dbReference type="neXtProt" id="NX_Q96JK9"/>
<dbReference type="OpenTargets" id="ENSG00000196782"/>
<dbReference type="PharmGKB" id="PA134953776"/>
<dbReference type="VEuPathDB" id="HostDB:ENSG00000196782"/>
<dbReference type="eggNOG" id="ENOG502QWEV">
    <property type="taxonomic scope" value="Eukaryota"/>
</dbReference>
<dbReference type="GeneTree" id="ENSGT00950000183201"/>
<dbReference type="HOGENOM" id="CLU_008569_0_0_1"/>
<dbReference type="InParanoid" id="Q96JK9"/>
<dbReference type="OMA" id="HHQMDIK"/>
<dbReference type="OrthoDB" id="5982619at2759"/>
<dbReference type="PAN-GO" id="Q96JK9">
    <property type="GO annotations" value="3 GO annotations based on evolutionary models"/>
</dbReference>
<dbReference type="PhylomeDB" id="Q96JK9"/>
<dbReference type="TreeFam" id="TF332922"/>
<dbReference type="PathwayCommons" id="Q96JK9"/>
<dbReference type="Reactome" id="R-HSA-1912408">
    <property type="pathway name" value="Pre-NOTCH Transcription and Translation"/>
</dbReference>
<dbReference type="Reactome" id="R-HSA-210744">
    <property type="pathway name" value="Regulation of gene expression in late stage (branching morphogenesis) pancreatic bud precursor cells"/>
</dbReference>
<dbReference type="Reactome" id="R-HSA-2122947">
    <property type="pathway name" value="NOTCH1 Intracellular Domain Regulates Transcription"/>
</dbReference>
<dbReference type="Reactome" id="R-HSA-2197563">
    <property type="pathway name" value="NOTCH2 intracellular domain regulates transcription"/>
</dbReference>
<dbReference type="Reactome" id="R-HSA-2644606">
    <property type="pathway name" value="Constitutive Signaling by NOTCH1 PEST Domain Mutants"/>
</dbReference>
<dbReference type="Reactome" id="R-HSA-2894862">
    <property type="pathway name" value="Constitutive Signaling by NOTCH1 HD+PEST Domain Mutants"/>
</dbReference>
<dbReference type="Reactome" id="R-HSA-350054">
    <property type="pathway name" value="Notch-HLH transcription pathway"/>
</dbReference>
<dbReference type="Reactome" id="R-HSA-8941856">
    <property type="pathway name" value="RUNX3 regulates NOTCH signaling"/>
</dbReference>
<dbReference type="Reactome" id="R-HSA-9013508">
    <property type="pathway name" value="NOTCH3 Intracellular Domain Regulates Transcription"/>
</dbReference>
<dbReference type="Reactome" id="R-HSA-9013695">
    <property type="pathway name" value="NOTCH4 Intracellular Domain Regulates Transcription"/>
</dbReference>
<dbReference type="Reactome" id="R-HSA-9793380">
    <property type="pathway name" value="Formation of paraxial mesoderm"/>
</dbReference>
<dbReference type="SignaLink" id="Q96JK9"/>
<dbReference type="SIGNOR" id="Q96JK9"/>
<dbReference type="BioGRID-ORCS" id="55534">
    <property type="hits" value="11 hits in 1149 CRISPR screens"/>
</dbReference>
<dbReference type="CD-CODE" id="804901D1">
    <property type="entry name" value="Nuclear speckle"/>
</dbReference>
<dbReference type="ChiTaRS" id="MAML3">
    <property type="organism name" value="human"/>
</dbReference>
<dbReference type="GenomeRNAi" id="55534"/>
<dbReference type="Pharos" id="Q96JK9">
    <property type="development level" value="Tbio"/>
</dbReference>
<dbReference type="PRO" id="PR:Q96JK9"/>
<dbReference type="Proteomes" id="UP000005640">
    <property type="component" value="Chromosome 4"/>
</dbReference>
<dbReference type="RNAct" id="Q96JK9">
    <property type="molecule type" value="protein"/>
</dbReference>
<dbReference type="Bgee" id="ENSG00000196782">
    <property type="expression patterns" value="Expressed in germinal epithelium of ovary and 162 other cell types or tissues"/>
</dbReference>
<dbReference type="ExpressionAtlas" id="Q96JK9">
    <property type="expression patterns" value="baseline and differential"/>
</dbReference>
<dbReference type="GO" id="GO:0016607">
    <property type="term" value="C:nuclear speck"/>
    <property type="evidence" value="ECO:0000314"/>
    <property type="project" value="HPA"/>
</dbReference>
<dbReference type="GO" id="GO:0005654">
    <property type="term" value="C:nucleoplasm"/>
    <property type="evidence" value="ECO:0000318"/>
    <property type="project" value="GO_Central"/>
</dbReference>
<dbReference type="GO" id="GO:0005634">
    <property type="term" value="C:nucleus"/>
    <property type="evidence" value="ECO:0000314"/>
    <property type="project" value="UniProtKB"/>
</dbReference>
<dbReference type="GO" id="GO:0003713">
    <property type="term" value="F:transcription coactivator activity"/>
    <property type="evidence" value="ECO:0000314"/>
    <property type="project" value="UniProtKB"/>
</dbReference>
<dbReference type="GO" id="GO:0007219">
    <property type="term" value="P:Notch signaling pathway"/>
    <property type="evidence" value="ECO:0000314"/>
    <property type="project" value="UniProtKB"/>
</dbReference>
<dbReference type="GO" id="GO:0045944">
    <property type="term" value="P:positive regulation of transcription by RNA polymerase II"/>
    <property type="evidence" value="ECO:0000314"/>
    <property type="project" value="UniProtKB"/>
</dbReference>
<dbReference type="GO" id="GO:0007221">
    <property type="term" value="P:positive regulation of transcription of Notch receptor target"/>
    <property type="evidence" value="ECO:0000318"/>
    <property type="project" value="GO_Central"/>
</dbReference>
<dbReference type="Gene3D" id="6.10.250.970">
    <property type="match status" value="1"/>
</dbReference>
<dbReference type="InterPro" id="IPR046369">
    <property type="entry name" value="MAML1-3"/>
</dbReference>
<dbReference type="InterPro" id="IPR048456">
    <property type="entry name" value="MAML1_3_TAD1"/>
</dbReference>
<dbReference type="InterPro" id="IPR048455">
    <property type="entry name" value="MAML1_3_TAD2"/>
</dbReference>
<dbReference type="InterPro" id="IPR046370">
    <property type="entry name" value="MAML_N_sf"/>
</dbReference>
<dbReference type="InterPro" id="IPR019082">
    <property type="entry name" value="Mastermind-like_N"/>
</dbReference>
<dbReference type="PANTHER" id="PTHR15692">
    <property type="entry name" value="MASTERMIND-LIKE"/>
    <property type="match status" value="1"/>
</dbReference>
<dbReference type="PANTHER" id="PTHR15692:SF8">
    <property type="entry name" value="MASTERMIND-LIKE PROTEIN 3"/>
    <property type="match status" value="1"/>
</dbReference>
<dbReference type="Pfam" id="PF09596">
    <property type="entry name" value="MamL-1"/>
    <property type="match status" value="1"/>
</dbReference>
<dbReference type="Pfam" id="PF20802">
    <property type="entry name" value="MAML1_3_TAD1"/>
    <property type="match status" value="1"/>
</dbReference>
<dbReference type="Pfam" id="PF20801">
    <property type="entry name" value="MAML1_3_TAD2"/>
    <property type="match status" value="1"/>
</dbReference>
<dbReference type="SMART" id="SM01275">
    <property type="entry name" value="MamL-1"/>
    <property type="match status" value="1"/>
</dbReference>
<protein>
    <recommendedName>
        <fullName>Mastermind-like protein 3</fullName>
        <shortName>Mam-3</shortName>
    </recommendedName>
</protein>
<accession>Q96JK9</accession>
<accession>B2RNU9</accession>
<accession>B3KVV7</accession>
<accession>E7EVW8</accession>
<name>MAML3_HUMAN</name>
<proteinExistence type="evidence at protein level"/>
<keyword id="KW-0007">Acetylation</keyword>
<keyword id="KW-0010">Activator</keyword>
<keyword id="KW-0914">Notch signaling pathway</keyword>
<keyword id="KW-0539">Nucleus</keyword>
<keyword id="KW-1267">Proteomics identification</keyword>
<keyword id="KW-1185">Reference proteome</keyword>
<keyword id="KW-0804">Transcription</keyword>
<keyword id="KW-0805">Transcription regulation</keyword>
<evidence type="ECO:0000256" key="1">
    <source>
        <dbReference type="SAM" id="MobiDB-lite"/>
    </source>
</evidence>
<evidence type="ECO:0000269" key="2">
    <source>
    </source>
</evidence>
<evidence type="ECO:0000269" key="3">
    <source>
    </source>
</evidence>
<evidence type="ECO:0000269" key="4">
    <source>
    </source>
</evidence>
<evidence type="ECO:0000269" key="5">
    <source>
    </source>
</evidence>
<evidence type="ECO:0000269" key="6">
    <source>
    </source>
</evidence>
<evidence type="ECO:0000269" key="7">
    <source ref="4"/>
</evidence>
<evidence type="ECO:0000305" key="8"/>
<evidence type="ECO:0000312" key="9">
    <source>
        <dbReference type="EMBL" id="BAB47445.1"/>
    </source>
</evidence>
<evidence type="ECO:0000312" key="10">
    <source>
        <dbReference type="HGNC" id="HGNC:16272"/>
    </source>
</evidence>
<evidence type="ECO:0007744" key="11">
    <source>
    </source>
</evidence>
<reference evidence="9" key="1">
    <citation type="journal article" date="2001" name="DNA Res.">
        <title>Prediction of the coding sequences of unidentified human genes. XX. The complete sequences of 100 new cDNA clones from brain which code for large proteins in vitro.</title>
        <authorList>
            <person name="Nagase T."/>
            <person name="Nakayama M."/>
            <person name="Nakajima D."/>
            <person name="Kikuno R."/>
            <person name="Ohara O."/>
        </authorList>
    </citation>
    <scope>NUCLEOTIDE SEQUENCE [LARGE SCALE MRNA]</scope>
    <scope>VARIANT GLN-768 DEL</scope>
    <source>
        <tissue evidence="9">Brain</tissue>
    </source>
</reference>
<reference key="2">
    <citation type="journal article" date="2004" name="Nat. Genet.">
        <title>Complete sequencing and characterization of 21,243 full-length human cDNAs.</title>
        <authorList>
            <person name="Ota T."/>
            <person name="Suzuki Y."/>
            <person name="Nishikawa T."/>
            <person name="Otsuki T."/>
            <person name="Sugiyama T."/>
            <person name="Irie R."/>
            <person name="Wakamatsu A."/>
            <person name="Hayashi K."/>
            <person name="Sato H."/>
            <person name="Nagai K."/>
            <person name="Kimura K."/>
            <person name="Makita H."/>
            <person name="Sekine M."/>
            <person name="Obayashi M."/>
            <person name="Nishi T."/>
            <person name="Shibahara T."/>
            <person name="Tanaka T."/>
            <person name="Ishii S."/>
            <person name="Yamamoto J."/>
            <person name="Saito K."/>
            <person name="Kawai Y."/>
            <person name="Isono Y."/>
            <person name="Nakamura Y."/>
            <person name="Nagahari K."/>
            <person name="Murakami K."/>
            <person name="Yasuda T."/>
            <person name="Iwayanagi T."/>
            <person name="Wagatsuma M."/>
            <person name="Shiratori A."/>
            <person name="Sudo H."/>
            <person name="Hosoiri T."/>
            <person name="Kaku Y."/>
            <person name="Kodaira H."/>
            <person name="Kondo H."/>
            <person name="Sugawara M."/>
            <person name="Takahashi M."/>
            <person name="Kanda K."/>
            <person name="Yokoi T."/>
            <person name="Furuya T."/>
            <person name="Kikkawa E."/>
            <person name="Omura Y."/>
            <person name="Abe K."/>
            <person name="Kamihara K."/>
            <person name="Katsuta N."/>
            <person name="Sato K."/>
            <person name="Tanikawa M."/>
            <person name="Yamazaki M."/>
            <person name="Ninomiya K."/>
            <person name="Ishibashi T."/>
            <person name="Yamashita H."/>
            <person name="Murakawa K."/>
            <person name="Fujimori K."/>
            <person name="Tanai H."/>
            <person name="Kimata M."/>
            <person name="Watanabe M."/>
            <person name="Hiraoka S."/>
            <person name="Chiba Y."/>
            <person name="Ishida S."/>
            <person name="Ono Y."/>
            <person name="Takiguchi S."/>
            <person name="Watanabe S."/>
            <person name="Yosida M."/>
            <person name="Hotuta T."/>
            <person name="Kusano J."/>
            <person name="Kanehori K."/>
            <person name="Takahashi-Fujii A."/>
            <person name="Hara H."/>
            <person name="Tanase T.-O."/>
            <person name="Nomura Y."/>
            <person name="Togiya S."/>
            <person name="Komai F."/>
            <person name="Hara R."/>
            <person name="Takeuchi K."/>
            <person name="Arita M."/>
            <person name="Imose N."/>
            <person name="Musashino K."/>
            <person name="Yuuki H."/>
            <person name="Oshima A."/>
            <person name="Sasaki N."/>
            <person name="Aotsuka S."/>
            <person name="Yoshikawa Y."/>
            <person name="Matsunawa H."/>
            <person name="Ichihara T."/>
            <person name="Shiohata N."/>
            <person name="Sano S."/>
            <person name="Moriya S."/>
            <person name="Momiyama H."/>
            <person name="Satoh N."/>
            <person name="Takami S."/>
            <person name="Terashima Y."/>
            <person name="Suzuki O."/>
            <person name="Nakagawa S."/>
            <person name="Senoh A."/>
            <person name="Mizoguchi H."/>
            <person name="Goto Y."/>
            <person name="Shimizu F."/>
            <person name="Wakebe H."/>
            <person name="Hishigaki H."/>
            <person name="Watanabe T."/>
            <person name="Sugiyama A."/>
            <person name="Takemoto M."/>
            <person name="Kawakami B."/>
            <person name="Yamazaki M."/>
            <person name="Watanabe K."/>
            <person name="Kumagai A."/>
            <person name="Itakura S."/>
            <person name="Fukuzumi Y."/>
            <person name="Fujimori Y."/>
            <person name="Komiyama M."/>
            <person name="Tashiro H."/>
            <person name="Tanigami A."/>
            <person name="Fujiwara T."/>
            <person name="Ono T."/>
            <person name="Yamada K."/>
            <person name="Fujii Y."/>
            <person name="Ozaki K."/>
            <person name="Hirao M."/>
            <person name="Ohmori Y."/>
            <person name="Kawabata A."/>
            <person name="Hikiji T."/>
            <person name="Kobatake N."/>
            <person name="Inagaki H."/>
            <person name="Ikema Y."/>
            <person name="Okamoto S."/>
            <person name="Okitani R."/>
            <person name="Kawakami T."/>
            <person name="Noguchi S."/>
            <person name="Itoh T."/>
            <person name="Shigeta K."/>
            <person name="Senba T."/>
            <person name="Matsumura K."/>
            <person name="Nakajima Y."/>
            <person name="Mizuno T."/>
            <person name="Morinaga M."/>
            <person name="Sasaki M."/>
            <person name="Togashi T."/>
            <person name="Oyama M."/>
            <person name="Hata H."/>
            <person name="Watanabe M."/>
            <person name="Komatsu T."/>
            <person name="Mizushima-Sugano J."/>
            <person name="Satoh T."/>
            <person name="Shirai Y."/>
            <person name="Takahashi Y."/>
            <person name="Nakagawa K."/>
            <person name="Okumura K."/>
            <person name="Nagase T."/>
            <person name="Nomura N."/>
            <person name="Kikuchi H."/>
            <person name="Masuho Y."/>
            <person name="Yamashita R."/>
            <person name="Nakai K."/>
            <person name="Yada T."/>
            <person name="Nakamura Y."/>
            <person name="Ohara O."/>
            <person name="Isogai T."/>
            <person name="Sugano S."/>
        </authorList>
    </citation>
    <scope>NUCLEOTIDE SEQUENCE [LARGE SCALE MRNA]</scope>
    <scope>VARIANT GLN-768 DEL</scope>
    <source>
        <tissue>Tongue</tissue>
    </source>
</reference>
<reference key="3">
    <citation type="journal article" date="2005" name="Nature">
        <title>Generation and annotation of the DNA sequences of human chromosomes 2 and 4.</title>
        <authorList>
            <person name="Hillier L.W."/>
            <person name="Graves T.A."/>
            <person name="Fulton R.S."/>
            <person name="Fulton L.A."/>
            <person name="Pepin K.H."/>
            <person name="Minx P."/>
            <person name="Wagner-McPherson C."/>
            <person name="Layman D."/>
            <person name="Wylie K."/>
            <person name="Sekhon M."/>
            <person name="Becker M.C."/>
            <person name="Fewell G.A."/>
            <person name="Delehaunty K.D."/>
            <person name="Miner T.L."/>
            <person name="Nash W.E."/>
            <person name="Kremitzki C."/>
            <person name="Oddy L."/>
            <person name="Du H."/>
            <person name="Sun H."/>
            <person name="Bradshaw-Cordum H."/>
            <person name="Ali J."/>
            <person name="Carter J."/>
            <person name="Cordes M."/>
            <person name="Harris A."/>
            <person name="Isak A."/>
            <person name="van Brunt A."/>
            <person name="Nguyen C."/>
            <person name="Du F."/>
            <person name="Courtney L."/>
            <person name="Kalicki J."/>
            <person name="Ozersky P."/>
            <person name="Abbott S."/>
            <person name="Armstrong J."/>
            <person name="Belter E.A."/>
            <person name="Caruso L."/>
            <person name="Cedroni M."/>
            <person name="Cotton M."/>
            <person name="Davidson T."/>
            <person name="Desai A."/>
            <person name="Elliott G."/>
            <person name="Erb T."/>
            <person name="Fronick C."/>
            <person name="Gaige T."/>
            <person name="Haakenson W."/>
            <person name="Haglund K."/>
            <person name="Holmes A."/>
            <person name="Harkins R."/>
            <person name="Kim K."/>
            <person name="Kruchowski S.S."/>
            <person name="Strong C.M."/>
            <person name="Grewal N."/>
            <person name="Goyea E."/>
            <person name="Hou S."/>
            <person name="Levy A."/>
            <person name="Martinka S."/>
            <person name="Mead K."/>
            <person name="McLellan M.D."/>
            <person name="Meyer R."/>
            <person name="Randall-Maher J."/>
            <person name="Tomlinson C."/>
            <person name="Dauphin-Kohlberg S."/>
            <person name="Kozlowicz-Reilly A."/>
            <person name="Shah N."/>
            <person name="Swearengen-Shahid S."/>
            <person name="Snider J."/>
            <person name="Strong J.T."/>
            <person name="Thompson J."/>
            <person name="Yoakum M."/>
            <person name="Leonard S."/>
            <person name="Pearman C."/>
            <person name="Trani L."/>
            <person name="Radionenko M."/>
            <person name="Waligorski J.E."/>
            <person name="Wang C."/>
            <person name="Rock S.M."/>
            <person name="Tin-Wollam A.-M."/>
            <person name="Maupin R."/>
            <person name="Latreille P."/>
            <person name="Wendl M.C."/>
            <person name="Yang S.-P."/>
            <person name="Pohl C."/>
            <person name="Wallis J.W."/>
            <person name="Spieth J."/>
            <person name="Bieri T.A."/>
            <person name="Berkowicz N."/>
            <person name="Nelson J.O."/>
            <person name="Osborne J."/>
            <person name="Ding L."/>
            <person name="Meyer R."/>
            <person name="Sabo A."/>
            <person name="Shotland Y."/>
            <person name="Sinha P."/>
            <person name="Wohldmann P.E."/>
            <person name="Cook L.L."/>
            <person name="Hickenbotham M.T."/>
            <person name="Eldred J."/>
            <person name="Williams D."/>
            <person name="Jones T.A."/>
            <person name="She X."/>
            <person name="Ciccarelli F.D."/>
            <person name="Izaurralde E."/>
            <person name="Taylor J."/>
            <person name="Schmutz J."/>
            <person name="Myers R.M."/>
            <person name="Cox D.R."/>
            <person name="Huang X."/>
            <person name="McPherson J.D."/>
            <person name="Mardis E.R."/>
            <person name="Clifton S.W."/>
            <person name="Warren W.C."/>
            <person name="Chinwalla A.T."/>
            <person name="Eddy S.R."/>
            <person name="Marra M.A."/>
            <person name="Ovcharenko I."/>
            <person name="Furey T.S."/>
            <person name="Miller W."/>
            <person name="Eichler E.E."/>
            <person name="Bork P."/>
            <person name="Suyama M."/>
            <person name="Torrents D."/>
            <person name="Waterston R.H."/>
            <person name="Wilson R.K."/>
        </authorList>
    </citation>
    <scope>NUCLEOTIDE SEQUENCE [LARGE SCALE GENOMIC DNA]</scope>
</reference>
<reference key="4">
    <citation type="submission" date="2005-09" db="EMBL/GenBank/DDBJ databases">
        <authorList>
            <person name="Mural R.J."/>
            <person name="Istrail S."/>
            <person name="Sutton G.G."/>
            <person name="Florea L."/>
            <person name="Halpern A.L."/>
            <person name="Mobarry C.M."/>
            <person name="Lippert R."/>
            <person name="Walenz B."/>
            <person name="Shatkay H."/>
            <person name="Dew I."/>
            <person name="Miller J.R."/>
            <person name="Flanigan M.J."/>
            <person name="Edwards N.J."/>
            <person name="Bolanos R."/>
            <person name="Fasulo D."/>
            <person name="Halldorsson B.V."/>
            <person name="Hannenhalli S."/>
            <person name="Turner R."/>
            <person name="Yooseph S."/>
            <person name="Lu F."/>
            <person name="Nusskern D.R."/>
            <person name="Shue B.C."/>
            <person name="Zheng X.H."/>
            <person name="Zhong F."/>
            <person name="Delcher A.L."/>
            <person name="Huson D.H."/>
            <person name="Kravitz S.A."/>
            <person name="Mouchard L."/>
            <person name="Reinert K."/>
            <person name="Remington K.A."/>
            <person name="Clark A.G."/>
            <person name="Waterman M.S."/>
            <person name="Eichler E.E."/>
            <person name="Adams M.D."/>
            <person name="Hunkapiller M.W."/>
            <person name="Myers E.W."/>
            <person name="Venter J.C."/>
        </authorList>
    </citation>
    <scope>NUCLEOTIDE SEQUENCE [LARGE SCALE GENOMIC DNA]</scope>
    <scope>VARIANT GLN-768 DEL</scope>
</reference>
<reference key="5">
    <citation type="journal article" date="2004" name="Genome Res.">
        <title>The status, quality, and expansion of the NIH full-length cDNA project: the Mammalian Gene Collection (MGC).</title>
        <authorList>
            <consortium name="The MGC Project Team"/>
        </authorList>
    </citation>
    <scope>NUCLEOTIDE SEQUENCE [LARGE SCALE MRNA]</scope>
    <scope>VARIANT GLN-768 DEL</scope>
    <source>
        <tissue>Brain</tissue>
    </source>
</reference>
<reference key="6">
    <citation type="journal article" date="2002" name="J. Biol. Chem.">
        <title>Identification of new human mastermind proteins defines a family that consists of positive regulators for Notch signaling.</title>
        <authorList>
            <person name="Lin S.-E."/>
            <person name="Oyama T."/>
            <person name="Nagase T."/>
            <person name="Harigaya K."/>
            <person name="Kitagawa M."/>
        </authorList>
    </citation>
    <scope>FUNCTION</scope>
    <scope>INTERACTION WITH NOTCH1</scope>
</reference>
<reference evidence="8" key="7">
    <citation type="journal article" date="2002" name="Mol. Cell. Biol.">
        <title>Identification of a family of mastermind-like transcriptional coactivators for mammalian notch receptors.</title>
        <authorList>
            <person name="Wu L."/>
            <person name="Sun T."/>
            <person name="Kobayashi K."/>
            <person name="Gao P."/>
            <person name="Griffin J.D."/>
        </authorList>
    </citation>
    <scope>FUNCTION</scope>
    <scope>SUBCELLULAR LOCATION</scope>
    <scope>INTERACTION WITH NOTCH1; NOTCH2; NOTCH3 AND NOTCH4</scope>
</reference>
<reference key="8">
    <citation type="journal article" date="2009" name="Science">
        <title>Lysine acetylation targets protein complexes and co-regulates major cellular functions.</title>
        <authorList>
            <person name="Choudhary C."/>
            <person name="Kumar C."/>
            <person name="Gnad F."/>
            <person name="Nielsen M.L."/>
            <person name="Rehman M."/>
            <person name="Walther T.C."/>
            <person name="Olsen J.V."/>
            <person name="Mann M."/>
        </authorList>
    </citation>
    <scope>ACETYLATION [LARGE SCALE ANALYSIS] AT LYS-603</scope>
    <scope>IDENTIFICATION BY MASS SPECTROMETRY [LARGE SCALE ANALYSIS]</scope>
</reference>